<feature type="chain" id="PRO_1000215847" description="Siroheme synthase">
    <location>
        <begin position="1"/>
        <end position="464"/>
    </location>
</feature>
<feature type="region of interest" description="Precorrin-2 dehydrogenase /sirohydrochlorin ferrochelatase" evidence="1">
    <location>
        <begin position="1"/>
        <end position="203"/>
    </location>
</feature>
<feature type="region of interest" description="Uroporphyrinogen-III C-methyltransferase" evidence="1">
    <location>
        <begin position="216"/>
        <end position="464"/>
    </location>
</feature>
<feature type="active site" description="Proton acceptor" evidence="1">
    <location>
        <position position="248"/>
    </location>
</feature>
<feature type="active site" description="Proton donor" evidence="1">
    <location>
        <position position="270"/>
    </location>
</feature>
<feature type="binding site" evidence="1">
    <location>
        <begin position="22"/>
        <end position="23"/>
    </location>
    <ligand>
        <name>NAD(+)</name>
        <dbReference type="ChEBI" id="CHEBI:57540"/>
    </ligand>
</feature>
<feature type="binding site" evidence="1">
    <location>
        <begin position="43"/>
        <end position="44"/>
    </location>
    <ligand>
        <name>NAD(+)</name>
        <dbReference type="ChEBI" id="CHEBI:57540"/>
    </ligand>
</feature>
<feature type="binding site" evidence="1">
    <location>
        <position position="225"/>
    </location>
    <ligand>
        <name>S-adenosyl-L-methionine</name>
        <dbReference type="ChEBI" id="CHEBI:59789"/>
    </ligand>
</feature>
<feature type="binding site" evidence="1">
    <location>
        <begin position="301"/>
        <end position="303"/>
    </location>
    <ligand>
        <name>S-adenosyl-L-methionine</name>
        <dbReference type="ChEBI" id="CHEBI:59789"/>
    </ligand>
</feature>
<feature type="binding site" evidence="1">
    <location>
        <position position="306"/>
    </location>
    <ligand>
        <name>S-adenosyl-L-methionine</name>
        <dbReference type="ChEBI" id="CHEBI:59789"/>
    </ligand>
</feature>
<feature type="binding site" evidence="1">
    <location>
        <begin position="331"/>
        <end position="332"/>
    </location>
    <ligand>
        <name>S-adenosyl-L-methionine</name>
        <dbReference type="ChEBI" id="CHEBI:59789"/>
    </ligand>
</feature>
<feature type="binding site" evidence="1">
    <location>
        <position position="383"/>
    </location>
    <ligand>
        <name>S-adenosyl-L-methionine</name>
        <dbReference type="ChEBI" id="CHEBI:59789"/>
    </ligand>
</feature>
<feature type="binding site" evidence="1">
    <location>
        <position position="412"/>
    </location>
    <ligand>
        <name>S-adenosyl-L-methionine</name>
        <dbReference type="ChEBI" id="CHEBI:59789"/>
    </ligand>
</feature>
<feature type="modified residue" description="Phosphoserine" evidence="1">
    <location>
        <position position="128"/>
    </location>
</feature>
<evidence type="ECO:0000255" key="1">
    <source>
        <dbReference type="HAMAP-Rule" id="MF_01646"/>
    </source>
</evidence>
<reference key="1">
    <citation type="journal article" date="2009" name="Genome Biol.">
        <title>Genomic and genetic analyses of diversity and plant interactions of Pseudomonas fluorescens.</title>
        <authorList>
            <person name="Silby M.W."/>
            <person name="Cerdeno-Tarraga A.M."/>
            <person name="Vernikos G.S."/>
            <person name="Giddens S.R."/>
            <person name="Jackson R.W."/>
            <person name="Preston G.M."/>
            <person name="Zhang X.-X."/>
            <person name="Moon C.D."/>
            <person name="Gehrig S.M."/>
            <person name="Godfrey S.A.C."/>
            <person name="Knight C.G."/>
            <person name="Malone J.G."/>
            <person name="Robinson Z."/>
            <person name="Spiers A.J."/>
            <person name="Harris S."/>
            <person name="Challis G.L."/>
            <person name="Yaxley A.M."/>
            <person name="Harris D."/>
            <person name="Seeger K."/>
            <person name="Murphy L."/>
            <person name="Rutter S."/>
            <person name="Squares R."/>
            <person name="Quail M.A."/>
            <person name="Saunders E."/>
            <person name="Mavromatis K."/>
            <person name="Brettin T.S."/>
            <person name="Bentley S.D."/>
            <person name="Hothersall J."/>
            <person name="Stephens E."/>
            <person name="Thomas C.M."/>
            <person name="Parkhill J."/>
            <person name="Levy S.B."/>
            <person name="Rainey P.B."/>
            <person name="Thomson N.R."/>
        </authorList>
    </citation>
    <scope>NUCLEOTIDE SEQUENCE [LARGE SCALE GENOMIC DNA]</scope>
    <source>
        <strain>SBW25</strain>
    </source>
</reference>
<keyword id="KW-0169">Cobalamin biosynthesis</keyword>
<keyword id="KW-0456">Lyase</keyword>
<keyword id="KW-0489">Methyltransferase</keyword>
<keyword id="KW-0511">Multifunctional enzyme</keyword>
<keyword id="KW-0520">NAD</keyword>
<keyword id="KW-0560">Oxidoreductase</keyword>
<keyword id="KW-0597">Phosphoprotein</keyword>
<keyword id="KW-0627">Porphyrin biosynthesis</keyword>
<keyword id="KW-0949">S-adenosyl-L-methionine</keyword>
<keyword id="KW-0808">Transferase</keyword>
<dbReference type="EC" id="2.1.1.107" evidence="1"/>
<dbReference type="EC" id="1.3.1.76" evidence="1"/>
<dbReference type="EC" id="4.99.1.4" evidence="1"/>
<dbReference type="EMBL" id="AM181176">
    <property type="protein sequence ID" value="CAY50097.1"/>
    <property type="molecule type" value="Genomic_DNA"/>
</dbReference>
<dbReference type="RefSeq" id="WP_012724932.1">
    <property type="nucleotide sequence ID" value="NC_012660.1"/>
</dbReference>
<dbReference type="SMR" id="C3JY53"/>
<dbReference type="STRING" id="294.SRM1_03423"/>
<dbReference type="GeneID" id="93465145"/>
<dbReference type="eggNOG" id="COG0007">
    <property type="taxonomic scope" value="Bacteria"/>
</dbReference>
<dbReference type="eggNOG" id="COG1648">
    <property type="taxonomic scope" value="Bacteria"/>
</dbReference>
<dbReference type="HOGENOM" id="CLU_011276_2_2_6"/>
<dbReference type="OrthoDB" id="9815856at2"/>
<dbReference type="UniPathway" id="UPA00148">
    <property type="reaction ID" value="UER00211"/>
</dbReference>
<dbReference type="UniPathway" id="UPA00148">
    <property type="reaction ID" value="UER00222"/>
</dbReference>
<dbReference type="UniPathway" id="UPA00262">
    <property type="reaction ID" value="UER00211"/>
</dbReference>
<dbReference type="UniPathway" id="UPA00262">
    <property type="reaction ID" value="UER00222"/>
</dbReference>
<dbReference type="UniPathway" id="UPA00262">
    <property type="reaction ID" value="UER00376"/>
</dbReference>
<dbReference type="GO" id="GO:0051287">
    <property type="term" value="F:NAD binding"/>
    <property type="evidence" value="ECO:0007669"/>
    <property type="project" value="InterPro"/>
</dbReference>
<dbReference type="GO" id="GO:0043115">
    <property type="term" value="F:precorrin-2 dehydrogenase activity"/>
    <property type="evidence" value="ECO:0007669"/>
    <property type="project" value="UniProtKB-UniRule"/>
</dbReference>
<dbReference type="GO" id="GO:0051266">
    <property type="term" value="F:sirohydrochlorin ferrochelatase activity"/>
    <property type="evidence" value="ECO:0007669"/>
    <property type="project" value="UniProtKB-EC"/>
</dbReference>
<dbReference type="GO" id="GO:0004851">
    <property type="term" value="F:uroporphyrin-III C-methyltransferase activity"/>
    <property type="evidence" value="ECO:0007669"/>
    <property type="project" value="UniProtKB-UniRule"/>
</dbReference>
<dbReference type="GO" id="GO:0009236">
    <property type="term" value="P:cobalamin biosynthetic process"/>
    <property type="evidence" value="ECO:0007669"/>
    <property type="project" value="UniProtKB-UniRule"/>
</dbReference>
<dbReference type="GO" id="GO:0032259">
    <property type="term" value="P:methylation"/>
    <property type="evidence" value="ECO:0007669"/>
    <property type="project" value="UniProtKB-KW"/>
</dbReference>
<dbReference type="GO" id="GO:0019354">
    <property type="term" value="P:siroheme biosynthetic process"/>
    <property type="evidence" value="ECO:0007669"/>
    <property type="project" value="UniProtKB-UniRule"/>
</dbReference>
<dbReference type="CDD" id="cd11642">
    <property type="entry name" value="SUMT"/>
    <property type="match status" value="1"/>
</dbReference>
<dbReference type="FunFam" id="3.30.160.110:FF:000001">
    <property type="entry name" value="Siroheme synthase"/>
    <property type="match status" value="1"/>
</dbReference>
<dbReference type="FunFam" id="3.30.950.10:FF:000001">
    <property type="entry name" value="Siroheme synthase"/>
    <property type="match status" value="1"/>
</dbReference>
<dbReference type="FunFam" id="3.40.1010.10:FF:000001">
    <property type="entry name" value="Siroheme synthase"/>
    <property type="match status" value="1"/>
</dbReference>
<dbReference type="Gene3D" id="3.40.1010.10">
    <property type="entry name" value="Cobalt-precorrin-4 Transmethylase, Domain 1"/>
    <property type="match status" value="1"/>
</dbReference>
<dbReference type="Gene3D" id="3.30.950.10">
    <property type="entry name" value="Methyltransferase, Cobalt-precorrin-4 Transmethylase, Domain 2"/>
    <property type="match status" value="1"/>
</dbReference>
<dbReference type="Gene3D" id="3.40.50.720">
    <property type="entry name" value="NAD(P)-binding Rossmann-like Domain"/>
    <property type="match status" value="1"/>
</dbReference>
<dbReference type="Gene3D" id="1.10.8.210">
    <property type="entry name" value="Sirohaem synthase, dimerisation domain"/>
    <property type="match status" value="1"/>
</dbReference>
<dbReference type="Gene3D" id="3.30.160.110">
    <property type="entry name" value="Siroheme synthase, domain 2"/>
    <property type="match status" value="1"/>
</dbReference>
<dbReference type="HAMAP" id="MF_01646">
    <property type="entry name" value="Siroheme_synth"/>
    <property type="match status" value="1"/>
</dbReference>
<dbReference type="InterPro" id="IPR000878">
    <property type="entry name" value="4pyrrol_Mease"/>
</dbReference>
<dbReference type="InterPro" id="IPR035996">
    <property type="entry name" value="4pyrrol_Methylase_sf"/>
</dbReference>
<dbReference type="InterPro" id="IPR014777">
    <property type="entry name" value="4pyrrole_Mease_sub1"/>
</dbReference>
<dbReference type="InterPro" id="IPR014776">
    <property type="entry name" value="4pyrrole_Mease_sub2"/>
</dbReference>
<dbReference type="InterPro" id="IPR006366">
    <property type="entry name" value="CobA/CysG_C"/>
</dbReference>
<dbReference type="InterPro" id="IPR036291">
    <property type="entry name" value="NAD(P)-bd_dom_sf"/>
</dbReference>
<dbReference type="InterPro" id="IPR050161">
    <property type="entry name" value="Siro_Cobalamin_biosynth"/>
</dbReference>
<dbReference type="InterPro" id="IPR037115">
    <property type="entry name" value="Sirohaem_synt_dimer_dom_sf"/>
</dbReference>
<dbReference type="InterPro" id="IPR012409">
    <property type="entry name" value="Sirohaem_synth"/>
</dbReference>
<dbReference type="InterPro" id="IPR028281">
    <property type="entry name" value="Sirohaem_synthase_central"/>
</dbReference>
<dbReference type="InterPro" id="IPR019478">
    <property type="entry name" value="Sirohaem_synthase_dimer_dom"/>
</dbReference>
<dbReference type="InterPro" id="IPR006367">
    <property type="entry name" value="Sirohaem_synthase_N"/>
</dbReference>
<dbReference type="InterPro" id="IPR003043">
    <property type="entry name" value="Uropor_MeTrfase_CS"/>
</dbReference>
<dbReference type="NCBIfam" id="TIGR01469">
    <property type="entry name" value="cobA_cysG_Cterm"/>
    <property type="match status" value="1"/>
</dbReference>
<dbReference type="NCBIfam" id="TIGR01470">
    <property type="entry name" value="cysG_Nterm"/>
    <property type="match status" value="1"/>
</dbReference>
<dbReference type="NCBIfam" id="NF004790">
    <property type="entry name" value="PRK06136.1"/>
    <property type="match status" value="1"/>
</dbReference>
<dbReference type="NCBIfam" id="NF007922">
    <property type="entry name" value="PRK10637.1"/>
    <property type="match status" value="1"/>
</dbReference>
<dbReference type="PANTHER" id="PTHR45790:SF1">
    <property type="entry name" value="SIROHEME SYNTHASE"/>
    <property type="match status" value="1"/>
</dbReference>
<dbReference type="PANTHER" id="PTHR45790">
    <property type="entry name" value="SIROHEME SYNTHASE-RELATED"/>
    <property type="match status" value="1"/>
</dbReference>
<dbReference type="Pfam" id="PF10414">
    <property type="entry name" value="CysG_dimeriser"/>
    <property type="match status" value="1"/>
</dbReference>
<dbReference type="Pfam" id="PF13241">
    <property type="entry name" value="NAD_binding_7"/>
    <property type="match status" value="1"/>
</dbReference>
<dbReference type="Pfam" id="PF14824">
    <property type="entry name" value="Sirohm_synth_M"/>
    <property type="match status" value="1"/>
</dbReference>
<dbReference type="Pfam" id="PF00590">
    <property type="entry name" value="TP_methylase"/>
    <property type="match status" value="1"/>
</dbReference>
<dbReference type="PIRSF" id="PIRSF036426">
    <property type="entry name" value="Sirohaem_synth"/>
    <property type="match status" value="1"/>
</dbReference>
<dbReference type="SUPFAM" id="SSF51735">
    <property type="entry name" value="NAD(P)-binding Rossmann-fold domains"/>
    <property type="match status" value="1"/>
</dbReference>
<dbReference type="SUPFAM" id="SSF75615">
    <property type="entry name" value="Siroheme synthase middle domains-like"/>
    <property type="match status" value="1"/>
</dbReference>
<dbReference type="SUPFAM" id="SSF53790">
    <property type="entry name" value="Tetrapyrrole methylase"/>
    <property type="match status" value="1"/>
</dbReference>
<dbReference type="PROSITE" id="PS00840">
    <property type="entry name" value="SUMT_2"/>
    <property type="match status" value="1"/>
</dbReference>
<proteinExistence type="inferred from homology"/>
<comment type="function">
    <text evidence="1">Multifunctional enzyme that catalyzes the SAM-dependent methylations of uroporphyrinogen III at position C-2 and C-7 to form precorrin-2 via precorrin-1. Then it catalyzes the NAD-dependent ring dehydrogenation of precorrin-2 to yield sirohydrochlorin. Finally, it catalyzes the ferrochelation of sirohydrochlorin to yield siroheme.</text>
</comment>
<comment type="catalytic activity">
    <reaction evidence="1">
        <text>uroporphyrinogen III + 2 S-adenosyl-L-methionine = precorrin-2 + 2 S-adenosyl-L-homocysteine + H(+)</text>
        <dbReference type="Rhea" id="RHEA:32459"/>
        <dbReference type="ChEBI" id="CHEBI:15378"/>
        <dbReference type="ChEBI" id="CHEBI:57308"/>
        <dbReference type="ChEBI" id="CHEBI:57856"/>
        <dbReference type="ChEBI" id="CHEBI:58827"/>
        <dbReference type="ChEBI" id="CHEBI:59789"/>
        <dbReference type="EC" id="2.1.1.107"/>
    </reaction>
</comment>
<comment type="catalytic activity">
    <reaction evidence="1">
        <text>precorrin-2 + NAD(+) = sirohydrochlorin + NADH + 2 H(+)</text>
        <dbReference type="Rhea" id="RHEA:15613"/>
        <dbReference type="ChEBI" id="CHEBI:15378"/>
        <dbReference type="ChEBI" id="CHEBI:57540"/>
        <dbReference type="ChEBI" id="CHEBI:57945"/>
        <dbReference type="ChEBI" id="CHEBI:58351"/>
        <dbReference type="ChEBI" id="CHEBI:58827"/>
        <dbReference type="EC" id="1.3.1.76"/>
    </reaction>
</comment>
<comment type="catalytic activity">
    <reaction evidence="1">
        <text>siroheme + 2 H(+) = sirohydrochlorin + Fe(2+)</text>
        <dbReference type="Rhea" id="RHEA:24360"/>
        <dbReference type="ChEBI" id="CHEBI:15378"/>
        <dbReference type="ChEBI" id="CHEBI:29033"/>
        <dbReference type="ChEBI" id="CHEBI:58351"/>
        <dbReference type="ChEBI" id="CHEBI:60052"/>
        <dbReference type="EC" id="4.99.1.4"/>
    </reaction>
</comment>
<comment type="pathway">
    <text evidence="1">Cofactor biosynthesis; adenosylcobalamin biosynthesis; precorrin-2 from uroporphyrinogen III: step 1/1.</text>
</comment>
<comment type="pathway">
    <text evidence="1">Cofactor biosynthesis; adenosylcobalamin biosynthesis; sirohydrochlorin from precorrin-2: step 1/1.</text>
</comment>
<comment type="pathway">
    <text evidence="1">Porphyrin-containing compound metabolism; siroheme biosynthesis; precorrin-2 from uroporphyrinogen III: step 1/1.</text>
</comment>
<comment type="pathway">
    <text evidence="1">Porphyrin-containing compound metabolism; siroheme biosynthesis; siroheme from sirohydrochlorin: step 1/1.</text>
</comment>
<comment type="pathway">
    <text evidence="1">Porphyrin-containing compound metabolism; siroheme biosynthesis; sirohydrochlorin from precorrin-2: step 1/1.</text>
</comment>
<comment type="similarity">
    <text evidence="1">In the N-terminal section; belongs to the precorrin-2 dehydrogenase / sirohydrochlorin ferrochelatase family.</text>
</comment>
<comment type="similarity">
    <text evidence="1">In the C-terminal section; belongs to the precorrin methyltransferase family.</text>
</comment>
<protein>
    <recommendedName>
        <fullName evidence="1">Siroheme synthase</fullName>
    </recommendedName>
    <domain>
        <recommendedName>
            <fullName evidence="1">Uroporphyrinogen-III C-methyltransferase</fullName>
            <shortName evidence="1">Urogen III methylase</shortName>
            <ecNumber evidence="1">2.1.1.107</ecNumber>
        </recommendedName>
        <alternativeName>
            <fullName evidence="1">SUMT</fullName>
        </alternativeName>
        <alternativeName>
            <fullName evidence="1">Uroporphyrinogen III methylase</fullName>
            <shortName evidence="1">UROM</shortName>
        </alternativeName>
    </domain>
    <domain>
        <recommendedName>
            <fullName evidence="1">Precorrin-2 dehydrogenase</fullName>
            <ecNumber evidence="1">1.3.1.76</ecNumber>
        </recommendedName>
    </domain>
    <domain>
        <recommendedName>
            <fullName evidence="1">Sirohydrochlorin ferrochelatase</fullName>
            <ecNumber evidence="1">4.99.1.4</ecNumber>
        </recommendedName>
    </domain>
</protein>
<gene>
    <name evidence="1" type="primary">cysG</name>
    <name type="ordered locus">PFLU_3796</name>
</gene>
<name>CYSG_PSEFS</name>
<accession>C3JY53</accession>
<sequence>MEFLPLFHNLRGSRVLVVGGGEIALRKSRLLADAGAVLRVVAPQIEDQLRELVQGSGGELMLRGYQEADLDGCTLIIAATDDEPLNAQVSSDAKRRCVPVNVVDAPALCSVIFPAIVDRSPLVIAVSSGGDAPVLARLIRAKLETWIPSTYGQLAGLAARFRAQVKGLYPDVQQRRAFWEEVFQGPIADRQLAGQGDEAERLLIEKVNGAPPYAPGEVYLVGAGPGDPDLLTFRALRLMQQADVVLYDRLVAPAILELCRRDAERIYVGKRRADHAVPQDQINQQLVDLAKQGKRVLRLKGGDPFIFGRGGEEIEELAAHGIPFQVVPGITAASGCAAYAGIPLTHRDYAQSVRFITGHLKNGTSDLPWQDLVGPSQTLVFYMGLIGLPIICEQLIKHGRAADTPAALIQQGTTSNQRVFTGTLADLPRMVAEHEVHAPTLVIVGEVVVLREKLKWFEGAQSQV</sequence>
<organism>
    <name type="scientific">Pseudomonas fluorescens (strain SBW25)</name>
    <dbReference type="NCBI Taxonomy" id="216595"/>
    <lineage>
        <taxon>Bacteria</taxon>
        <taxon>Pseudomonadati</taxon>
        <taxon>Pseudomonadota</taxon>
        <taxon>Gammaproteobacteria</taxon>
        <taxon>Pseudomonadales</taxon>
        <taxon>Pseudomonadaceae</taxon>
        <taxon>Pseudomonas</taxon>
    </lineage>
</organism>